<gene>
    <name evidence="11" type="primary">SrpRalpha</name>
    <name evidence="11" type="synonym">Gtp-bp</name>
    <name evidence="11" type="ORF">CG2522</name>
</gene>
<sequence>MLDFVVIFTKGGVVLWHSNASGNSFASCINSLIRGVILEERNTEAKYYEEDHLAVQFKLDNELDLVYAAIFQKVIKLNYLDGFLADMQAAFKEKYGDIRLGDDYDFDREYRRVLSAAEEASAKQVKAPKTMRSYNESQKSKKTVASMIQDDKKPVEKRVNIQEAPPPSKSQPSSPPTGSPMDKIIMEKRRKLREKLTPTKKTSPSDSKSSKPEKAGKKPRVWDLGGNSKDAALLDRSRDSPDDVQYQNINSELVGTMQGVIRDLDVESEDEADNEDASSEGEAEEQVQSKKGKRGGLLSYFKGIVGAKTMSLADLQPALEKMRDHLISKNVASEIAAKLCDSVAASLDGKQMGTFDSIASQVKEALTESLVRILSPKRRIDIIRDALESKRNGRPYTIIFCGVNGVGKSTNLAKICFWLIENDFNVLIAACDTFRAGAVEQLRTHTRHLNALHPAAKHDGRNMVQLYEKGYGKDAAGIAMEAIKFAHDTRVDVVLVDTAGRMQDNEPLMRSLSKLIKVNNPDLVLFVGEALVGNEAVDQLVKFNQSLADYSSNENPHIIDGIVLTKFDTIDDKVGAAISMTYITGQPIVFVGTGQTYADLKAINVNAVVNSLMK</sequence>
<accession>Q9U5L1</accession>
<accession>Q95RJ8</accession>
<accession>Q9VZ29</accession>
<feature type="chain" id="PRO_0000101215" description="Signal recognition particle receptor subunit alpha homolog">
    <location>
        <begin position="1"/>
        <end position="614"/>
    </location>
</feature>
<feature type="region of interest" description="Disordered" evidence="4">
    <location>
        <begin position="119"/>
        <end position="244"/>
    </location>
</feature>
<feature type="region of interest" description="Disordered" evidence="4">
    <location>
        <begin position="268"/>
        <end position="290"/>
    </location>
</feature>
<feature type="region of interest" description="NG domain" evidence="2">
    <location>
        <begin position="396"/>
        <end position="613"/>
    </location>
</feature>
<feature type="compositionally biased region" description="Basic and acidic residues" evidence="4">
    <location>
        <begin position="149"/>
        <end position="160"/>
    </location>
</feature>
<feature type="compositionally biased region" description="Pro residues" evidence="4">
    <location>
        <begin position="164"/>
        <end position="178"/>
    </location>
</feature>
<feature type="compositionally biased region" description="Basic and acidic residues" evidence="4">
    <location>
        <begin position="232"/>
        <end position="241"/>
    </location>
</feature>
<feature type="compositionally biased region" description="Acidic residues" evidence="4">
    <location>
        <begin position="268"/>
        <end position="285"/>
    </location>
</feature>
<feature type="binding site" evidence="1 9">
    <location>
        <begin position="402"/>
        <end position="409"/>
    </location>
    <ligand>
        <name>GTP</name>
        <dbReference type="ChEBI" id="CHEBI:37565"/>
    </ligand>
</feature>
<feature type="binding site" evidence="1 9">
    <location>
        <begin position="497"/>
        <end position="501"/>
    </location>
    <ligand>
        <name>GTP</name>
        <dbReference type="ChEBI" id="CHEBI:37565"/>
    </ligand>
</feature>
<feature type="binding site" evidence="1 9">
    <location>
        <begin position="565"/>
        <end position="568"/>
    </location>
    <ligand>
        <name>GTP</name>
        <dbReference type="ChEBI" id="CHEBI:37565"/>
    </ligand>
</feature>
<feature type="modified residue" description="Phosphoserine" evidence="7">
    <location>
        <position position="237"/>
    </location>
</feature>
<feature type="modified residue" description="Phosphoserine" evidence="7">
    <location>
        <position position="240"/>
    </location>
</feature>
<feature type="modified residue" description="Phosphotyrosine" evidence="7">
    <location>
        <position position="246"/>
    </location>
</feature>
<feature type="modified residue" description="Phosphoserine" evidence="7">
    <location>
        <position position="268"/>
    </location>
</feature>
<feature type="modified residue" description="Phosphoserine" evidence="7">
    <location>
        <position position="278"/>
    </location>
</feature>
<feature type="modified residue" description="Phosphoserine" evidence="7">
    <location>
        <position position="279"/>
    </location>
</feature>
<feature type="sequence conflict" description="In Ref. 4." evidence="9" ref="4">
    <original>TNLA</original>
    <variation>RC</variation>
    <location>
        <begin position="410"/>
        <end position="413"/>
    </location>
</feature>
<feature type="sequence conflict" description="In Ref. 4." evidence="9" ref="4">
    <original>I</original>
    <variation>L</variation>
    <location>
        <position position="428"/>
    </location>
</feature>
<feature type="sequence conflict" description="In Ref. 4." evidence="9" ref="4">
    <original>N</original>
    <variation>H</variation>
    <location>
        <position position="450"/>
    </location>
</feature>
<feature type="sequence conflict" description="In Ref. 4; AAB27926." evidence="9" ref="4">
    <original>D</original>
    <variation>G</variation>
    <location>
        <position position="549"/>
    </location>
</feature>
<feature type="sequence conflict" description="In Ref. 4; AAB27926." evidence="9" ref="4">
    <original>PHI</original>
    <variation>RH</variation>
    <location>
        <begin position="556"/>
        <end position="558"/>
    </location>
</feature>
<feature type="sequence conflict" description="In Ref. 4." evidence="9" ref="4">
    <original>FDTIDDK</original>
    <variation>LHTMQHD</variation>
    <location>
        <begin position="567"/>
        <end position="573"/>
    </location>
</feature>
<organism evidence="10">
    <name type="scientific">Drosophila melanogaster</name>
    <name type="common">Fruit fly</name>
    <dbReference type="NCBI Taxonomy" id="7227"/>
    <lineage>
        <taxon>Eukaryota</taxon>
        <taxon>Metazoa</taxon>
        <taxon>Ecdysozoa</taxon>
        <taxon>Arthropoda</taxon>
        <taxon>Hexapoda</taxon>
        <taxon>Insecta</taxon>
        <taxon>Pterygota</taxon>
        <taxon>Neoptera</taxon>
        <taxon>Endopterygota</taxon>
        <taxon>Diptera</taxon>
        <taxon>Brachycera</taxon>
        <taxon>Muscomorpha</taxon>
        <taxon>Ephydroidea</taxon>
        <taxon>Drosophilidae</taxon>
        <taxon>Drosophila</taxon>
        <taxon>Sophophora</taxon>
    </lineage>
</organism>
<proteinExistence type="evidence at protein level"/>
<protein>
    <recommendedName>
        <fullName>Signal recognition particle receptor subunit alpha homolog</fullName>
        <shortName>DP-alpha</shortName>
        <shortName>Docking protein alpha</shortName>
        <shortName>SR-alpha</shortName>
    </recommendedName>
    <alternativeName>
        <fullName>GTP-binding protein</fullName>
    </alternativeName>
</protein>
<comment type="function">
    <text evidence="2 8">Component of the SRP (signal recognition particle) receptor (By similarity). Ensures, in conjunction with the signal recognition particle, the correct targeting of the nascent secretory proteins to the endoplasmic reticulum membrane system (By similarity). Forms a guanosine 5'-triphosphate (GTP)-dependent complex with the SRP subunit Srp54 (By similarity). SRP receptor compaction and GTPase rearrangement drive SRP-mediated cotranslational protein translocation into the ER (By similarity). May have a role in axonogenesis (PubMed:8360279).</text>
</comment>
<comment type="subunit">
    <text evidence="3">Heterodimer of SrpRalpha and SrpRbeta.</text>
</comment>
<comment type="subcellular location">
    <subcellularLocation>
        <location evidence="3">Endoplasmic reticulum membrane</location>
        <topology evidence="3">Peripheral membrane protein</topology>
        <orientation evidence="3">Cytoplasmic side</orientation>
    </subcellularLocation>
    <text evidence="3">Thought to be anchored in the membrane through an interaction with SrpRbeta, which contains a bona fide transmembrane domain.</text>
</comment>
<comment type="tissue specificity">
    <text evidence="8">In 8-9 hours embryos, expression is seen in a segmental pattern along embryonic ventral midline.</text>
</comment>
<comment type="developmental stage">
    <text evidence="8">Expressed both maternally and zygotically. Zygotic expression peaks at 12-18 hours of embryonic development.</text>
</comment>
<comment type="domain">
    <text evidence="2">The NG domain, also named G domain, is a special guanosine triphosphatase (GTPase) domain, which forms a guanosine 5'-triphosphate (GTP)-dependent complex with a homologous NG domain in the signal recognition particle (SRP) complex subunit SRP54 (By similarity). The two NG domains undergo cooperative rearrangements upon their assembly, which culminate in the reciprocal activation of the GTPase activity of one another (By similarity). GTPase induced rearrangement of SR drives SRP-mediated cotranslational protein translocation into the ER (By similarity).</text>
</comment>
<comment type="similarity">
    <text evidence="9">Belongs to the GTP-binding SRP family.</text>
</comment>
<comment type="sequence caution" evidence="9">
    <conflict type="frameshift">
        <sequence resource="EMBL-CDS" id="AAB27926"/>
    </conflict>
</comment>
<comment type="sequence caution" evidence="9">
    <conflict type="frameshift">
        <sequence resource="EMBL-CDS" id="AAL28877"/>
    </conflict>
</comment>
<evidence type="ECO:0000250" key="1"/>
<evidence type="ECO:0000250" key="2">
    <source>
        <dbReference type="UniProtKB" id="P08240"/>
    </source>
</evidence>
<evidence type="ECO:0000250" key="3">
    <source>
        <dbReference type="UniProtKB" id="P32916"/>
    </source>
</evidence>
<evidence type="ECO:0000256" key="4">
    <source>
        <dbReference type="SAM" id="MobiDB-lite"/>
    </source>
</evidence>
<evidence type="ECO:0000269" key="5">
    <source>
    </source>
</evidence>
<evidence type="ECO:0000269" key="6">
    <source>
    </source>
</evidence>
<evidence type="ECO:0000269" key="7">
    <source>
    </source>
</evidence>
<evidence type="ECO:0000269" key="8">
    <source>
    </source>
</evidence>
<evidence type="ECO:0000305" key="9"/>
<evidence type="ECO:0000312" key="10">
    <source>
        <dbReference type="EMBL" id="AAF48002.2"/>
    </source>
</evidence>
<evidence type="ECO:0000312" key="11">
    <source>
        <dbReference type="FlyBase" id="FBgn0010391"/>
    </source>
</evidence>
<dbReference type="EMBL" id="AE014298">
    <property type="protein sequence ID" value="AAF48002.2"/>
    <property type="molecule type" value="Genomic_DNA"/>
</dbReference>
<dbReference type="EMBL" id="AY061329">
    <property type="protein sequence ID" value="AAL28877.1"/>
    <property type="status" value="ALT_FRAME"/>
    <property type="molecule type" value="mRNA"/>
</dbReference>
<dbReference type="EMBL" id="S65640">
    <property type="protein sequence ID" value="AAB27926.1"/>
    <property type="status" value="ALT_FRAME"/>
    <property type="molecule type" value="mRNA"/>
</dbReference>
<dbReference type="RefSeq" id="NP_524887.2">
    <property type="nucleotide sequence ID" value="NM_080148.3"/>
</dbReference>
<dbReference type="SMR" id="Q9U5L1"/>
<dbReference type="BioGRID" id="70718">
    <property type="interactions" value="11"/>
</dbReference>
<dbReference type="ComplexPortal" id="CPX-2235">
    <property type="entry name" value="Signal recognition particle receptor complex"/>
</dbReference>
<dbReference type="FunCoup" id="Q9U5L1">
    <property type="interactions" value="2087"/>
</dbReference>
<dbReference type="IntAct" id="Q9U5L1">
    <property type="interactions" value="6"/>
</dbReference>
<dbReference type="STRING" id="7227.FBpp0073336"/>
<dbReference type="iPTMnet" id="Q9U5L1"/>
<dbReference type="PaxDb" id="7227-FBpp0073336"/>
<dbReference type="DNASU" id="47251"/>
<dbReference type="EnsemblMetazoa" id="FBtr0073480">
    <property type="protein sequence ID" value="FBpp0073336"/>
    <property type="gene ID" value="FBgn0010391"/>
</dbReference>
<dbReference type="GeneID" id="47251"/>
<dbReference type="KEGG" id="dme:Dmel_CG2522"/>
<dbReference type="AGR" id="FB:FBgn0010391"/>
<dbReference type="CTD" id="47251"/>
<dbReference type="FlyBase" id="FBgn0010391">
    <property type="gene designation" value="SrpRalpha"/>
</dbReference>
<dbReference type="VEuPathDB" id="VectorBase:FBgn0010391"/>
<dbReference type="eggNOG" id="KOG0781">
    <property type="taxonomic scope" value="Eukaryota"/>
</dbReference>
<dbReference type="GeneTree" id="ENSGT00550000074936"/>
<dbReference type="HOGENOM" id="CLU_009301_8_1_1"/>
<dbReference type="InParanoid" id="Q9U5L1"/>
<dbReference type="OMA" id="HLGWIDK"/>
<dbReference type="OrthoDB" id="1727884at2759"/>
<dbReference type="PhylomeDB" id="Q9U5L1"/>
<dbReference type="BioGRID-ORCS" id="47251">
    <property type="hits" value="0 hits in 1 CRISPR screen"/>
</dbReference>
<dbReference type="GenomeRNAi" id="47251"/>
<dbReference type="PRO" id="PR:Q9U5L1"/>
<dbReference type="Proteomes" id="UP000000803">
    <property type="component" value="Chromosome X"/>
</dbReference>
<dbReference type="Bgee" id="FBgn0010391">
    <property type="expression patterns" value="Expressed in spermathecum and 192 other cell types or tissues"/>
</dbReference>
<dbReference type="ExpressionAtlas" id="Q9U5L1">
    <property type="expression patterns" value="baseline and differential"/>
</dbReference>
<dbReference type="GO" id="GO:0012505">
    <property type="term" value="C:endomembrane system"/>
    <property type="evidence" value="ECO:0007005"/>
    <property type="project" value="FlyBase"/>
</dbReference>
<dbReference type="GO" id="GO:0005789">
    <property type="term" value="C:endoplasmic reticulum membrane"/>
    <property type="evidence" value="ECO:0000314"/>
    <property type="project" value="UniProtKB"/>
</dbReference>
<dbReference type="GO" id="GO:0005785">
    <property type="term" value="C:signal recognition particle receptor complex"/>
    <property type="evidence" value="ECO:0007669"/>
    <property type="project" value="InterPro"/>
</dbReference>
<dbReference type="GO" id="GO:0016887">
    <property type="term" value="F:ATP hydrolysis activity"/>
    <property type="evidence" value="ECO:0007669"/>
    <property type="project" value="InterPro"/>
</dbReference>
<dbReference type="GO" id="GO:0005525">
    <property type="term" value="F:GTP binding"/>
    <property type="evidence" value="ECO:0007669"/>
    <property type="project" value="UniProtKB-KW"/>
</dbReference>
<dbReference type="GO" id="GO:0003924">
    <property type="term" value="F:GTPase activity"/>
    <property type="evidence" value="ECO:0000318"/>
    <property type="project" value="GO_Central"/>
</dbReference>
<dbReference type="GO" id="GO:0003723">
    <property type="term" value="F:RNA binding"/>
    <property type="evidence" value="ECO:0000303"/>
    <property type="project" value="UniProtKB"/>
</dbReference>
<dbReference type="GO" id="GO:0005047">
    <property type="term" value="F:signal recognition particle binding"/>
    <property type="evidence" value="ECO:0000318"/>
    <property type="project" value="GO_Central"/>
</dbReference>
<dbReference type="GO" id="GO:0007409">
    <property type="term" value="P:axonogenesis"/>
    <property type="evidence" value="ECO:0000270"/>
    <property type="project" value="UniProtKB"/>
</dbReference>
<dbReference type="GO" id="GO:0006886">
    <property type="term" value="P:intracellular protein transport"/>
    <property type="evidence" value="ECO:0007669"/>
    <property type="project" value="InterPro"/>
</dbReference>
<dbReference type="GO" id="GO:0045047">
    <property type="term" value="P:protein targeting to ER"/>
    <property type="evidence" value="ECO:0000318"/>
    <property type="project" value="GO_Central"/>
</dbReference>
<dbReference type="GO" id="GO:0050708">
    <property type="term" value="P:regulation of protein secretion"/>
    <property type="evidence" value="ECO:0000270"/>
    <property type="project" value="UniProtKB"/>
</dbReference>
<dbReference type="GO" id="GO:0006614">
    <property type="term" value="P:SRP-dependent cotranslational protein targeting to membrane"/>
    <property type="evidence" value="ECO:0007669"/>
    <property type="project" value="InterPro"/>
</dbReference>
<dbReference type="CDD" id="cd14826">
    <property type="entry name" value="SR_alpha_SRX"/>
    <property type="match status" value="1"/>
</dbReference>
<dbReference type="CDD" id="cd17876">
    <property type="entry name" value="SRalpha_C"/>
    <property type="match status" value="1"/>
</dbReference>
<dbReference type="FunFam" id="1.20.120.140:FF:000017">
    <property type="entry name" value="Predicted protein"/>
    <property type="match status" value="1"/>
</dbReference>
<dbReference type="FunFam" id="3.40.50.300:FF:000188">
    <property type="entry name" value="signal recognition particle receptor subunit alpha"/>
    <property type="match status" value="1"/>
</dbReference>
<dbReference type="Gene3D" id="3.30.450.60">
    <property type="match status" value="1"/>
</dbReference>
<dbReference type="Gene3D" id="3.40.50.300">
    <property type="entry name" value="P-loop containing nucleotide triphosphate hydrolases"/>
    <property type="match status" value="1"/>
</dbReference>
<dbReference type="Gene3D" id="1.20.120.140">
    <property type="entry name" value="Signal recognition particle SRP54, nucleotide-binding domain"/>
    <property type="match status" value="1"/>
</dbReference>
<dbReference type="InterPro" id="IPR003593">
    <property type="entry name" value="AAA+_ATPase"/>
</dbReference>
<dbReference type="InterPro" id="IPR011012">
    <property type="entry name" value="Longin-like_dom_sf"/>
</dbReference>
<dbReference type="InterPro" id="IPR027417">
    <property type="entry name" value="P-loop_NTPase"/>
</dbReference>
<dbReference type="InterPro" id="IPR007222">
    <property type="entry name" value="Sig_recog_particle_rcpt_asu_N"/>
</dbReference>
<dbReference type="InterPro" id="IPR013822">
    <property type="entry name" value="Signal_recog_particl_SRP54_hlx"/>
</dbReference>
<dbReference type="InterPro" id="IPR036225">
    <property type="entry name" value="SRP/SRP_N"/>
</dbReference>
<dbReference type="InterPro" id="IPR000897">
    <property type="entry name" value="SRP54_GTPase_dom"/>
</dbReference>
<dbReference type="InterPro" id="IPR042101">
    <property type="entry name" value="SRP54_N_sf"/>
</dbReference>
<dbReference type="PANTHER" id="PTHR43134">
    <property type="entry name" value="SIGNAL RECOGNITION PARTICLE RECEPTOR SUBUNIT ALPHA"/>
    <property type="match status" value="1"/>
</dbReference>
<dbReference type="PANTHER" id="PTHR43134:SF1">
    <property type="entry name" value="SIGNAL RECOGNITION PARTICLE RECEPTOR SUBUNIT ALPHA"/>
    <property type="match status" value="1"/>
</dbReference>
<dbReference type="Pfam" id="PF04086">
    <property type="entry name" value="SRP-alpha_N"/>
    <property type="match status" value="1"/>
</dbReference>
<dbReference type="Pfam" id="PF00448">
    <property type="entry name" value="SRP54"/>
    <property type="match status" value="1"/>
</dbReference>
<dbReference type="Pfam" id="PF02881">
    <property type="entry name" value="SRP54_N"/>
    <property type="match status" value="1"/>
</dbReference>
<dbReference type="SMART" id="SM00382">
    <property type="entry name" value="AAA"/>
    <property type="match status" value="1"/>
</dbReference>
<dbReference type="SMART" id="SM00962">
    <property type="entry name" value="SRP54"/>
    <property type="match status" value="1"/>
</dbReference>
<dbReference type="SMART" id="SM00963">
    <property type="entry name" value="SRP54_N"/>
    <property type="match status" value="1"/>
</dbReference>
<dbReference type="SUPFAM" id="SSF47364">
    <property type="entry name" value="Domain of the SRP/SRP receptor G-proteins"/>
    <property type="match status" value="1"/>
</dbReference>
<dbReference type="SUPFAM" id="SSF52540">
    <property type="entry name" value="P-loop containing nucleoside triphosphate hydrolases"/>
    <property type="match status" value="1"/>
</dbReference>
<dbReference type="SUPFAM" id="SSF64356">
    <property type="entry name" value="SNARE-like"/>
    <property type="match status" value="1"/>
</dbReference>
<dbReference type="PROSITE" id="PS00300">
    <property type="entry name" value="SRP54"/>
    <property type="match status" value="1"/>
</dbReference>
<reference evidence="9" key="1">
    <citation type="journal article" date="2000" name="Science">
        <title>The genome sequence of Drosophila melanogaster.</title>
        <authorList>
            <person name="Adams M.D."/>
            <person name="Celniker S.E."/>
            <person name="Holt R.A."/>
            <person name="Evans C.A."/>
            <person name="Gocayne J.D."/>
            <person name="Amanatides P.G."/>
            <person name="Scherer S.E."/>
            <person name="Li P.W."/>
            <person name="Hoskins R.A."/>
            <person name="Galle R.F."/>
            <person name="George R.A."/>
            <person name="Lewis S.E."/>
            <person name="Richards S."/>
            <person name="Ashburner M."/>
            <person name="Henderson S.N."/>
            <person name="Sutton G.G."/>
            <person name="Wortman J.R."/>
            <person name="Yandell M.D."/>
            <person name="Zhang Q."/>
            <person name="Chen L.X."/>
            <person name="Brandon R.C."/>
            <person name="Rogers Y.-H.C."/>
            <person name="Blazej R.G."/>
            <person name="Champe M."/>
            <person name="Pfeiffer B.D."/>
            <person name="Wan K.H."/>
            <person name="Doyle C."/>
            <person name="Baxter E.G."/>
            <person name="Helt G."/>
            <person name="Nelson C.R."/>
            <person name="Miklos G.L.G."/>
            <person name="Abril J.F."/>
            <person name="Agbayani A."/>
            <person name="An H.-J."/>
            <person name="Andrews-Pfannkoch C."/>
            <person name="Baldwin D."/>
            <person name="Ballew R.M."/>
            <person name="Basu A."/>
            <person name="Baxendale J."/>
            <person name="Bayraktaroglu L."/>
            <person name="Beasley E.M."/>
            <person name="Beeson K.Y."/>
            <person name="Benos P.V."/>
            <person name="Berman B.P."/>
            <person name="Bhandari D."/>
            <person name="Bolshakov S."/>
            <person name="Borkova D."/>
            <person name="Botchan M.R."/>
            <person name="Bouck J."/>
            <person name="Brokstein P."/>
            <person name="Brottier P."/>
            <person name="Burtis K.C."/>
            <person name="Busam D.A."/>
            <person name="Butler H."/>
            <person name="Cadieu E."/>
            <person name="Center A."/>
            <person name="Chandra I."/>
            <person name="Cherry J.M."/>
            <person name="Cawley S."/>
            <person name="Dahlke C."/>
            <person name="Davenport L.B."/>
            <person name="Davies P."/>
            <person name="de Pablos B."/>
            <person name="Delcher A."/>
            <person name="Deng Z."/>
            <person name="Mays A.D."/>
            <person name="Dew I."/>
            <person name="Dietz S.M."/>
            <person name="Dodson K."/>
            <person name="Doup L.E."/>
            <person name="Downes M."/>
            <person name="Dugan-Rocha S."/>
            <person name="Dunkov B.C."/>
            <person name="Dunn P."/>
            <person name="Durbin K.J."/>
            <person name="Evangelista C.C."/>
            <person name="Ferraz C."/>
            <person name="Ferriera S."/>
            <person name="Fleischmann W."/>
            <person name="Fosler C."/>
            <person name="Gabrielian A.E."/>
            <person name="Garg N.S."/>
            <person name="Gelbart W.M."/>
            <person name="Glasser K."/>
            <person name="Glodek A."/>
            <person name="Gong F."/>
            <person name="Gorrell J.H."/>
            <person name="Gu Z."/>
            <person name="Guan P."/>
            <person name="Harris M."/>
            <person name="Harris N.L."/>
            <person name="Harvey D.A."/>
            <person name="Heiman T.J."/>
            <person name="Hernandez J.R."/>
            <person name="Houck J."/>
            <person name="Hostin D."/>
            <person name="Houston K.A."/>
            <person name="Howland T.J."/>
            <person name="Wei M.-H."/>
            <person name="Ibegwam C."/>
            <person name="Jalali M."/>
            <person name="Kalush F."/>
            <person name="Karpen G.H."/>
            <person name="Ke Z."/>
            <person name="Kennison J.A."/>
            <person name="Ketchum K.A."/>
            <person name="Kimmel B.E."/>
            <person name="Kodira C.D."/>
            <person name="Kraft C.L."/>
            <person name="Kravitz S."/>
            <person name="Kulp D."/>
            <person name="Lai Z."/>
            <person name="Lasko P."/>
            <person name="Lei Y."/>
            <person name="Levitsky A.A."/>
            <person name="Li J.H."/>
            <person name="Li Z."/>
            <person name="Liang Y."/>
            <person name="Lin X."/>
            <person name="Liu X."/>
            <person name="Mattei B."/>
            <person name="McIntosh T.C."/>
            <person name="McLeod M.P."/>
            <person name="McPherson D."/>
            <person name="Merkulov G."/>
            <person name="Milshina N.V."/>
            <person name="Mobarry C."/>
            <person name="Morris J."/>
            <person name="Moshrefi A."/>
            <person name="Mount S.M."/>
            <person name="Moy M."/>
            <person name="Murphy B."/>
            <person name="Murphy L."/>
            <person name="Muzny D.M."/>
            <person name="Nelson D.L."/>
            <person name="Nelson D.R."/>
            <person name="Nelson K.A."/>
            <person name="Nixon K."/>
            <person name="Nusskern D.R."/>
            <person name="Pacleb J.M."/>
            <person name="Palazzolo M."/>
            <person name="Pittman G.S."/>
            <person name="Pan S."/>
            <person name="Pollard J."/>
            <person name="Puri V."/>
            <person name="Reese M.G."/>
            <person name="Reinert K."/>
            <person name="Remington K."/>
            <person name="Saunders R.D.C."/>
            <person name="Scheeler F."/>
            <person name="Shen H."/>
            <person name="Shue B.C."/>
            <person name="Siden-Kiamos I."/>
            <person name="Simpson M."/>
            <person name="Skupski M.P."/>
            <person name="Smith T.J."/>
            <person name="Spier E."/>
            <person name="Spradling A.C."/>
            <person name="Stapleton M."/>
            <person name="Strong R."/>
            <person name="Sun E."/>
            <person name="Svirskas R."/>
            <person name="Tector C."/>
            <person name="Turner R."/>
            <person name="Venter E."/>
            <person name="Wang A.H."/>
            <person name="Wang X."/>
            <person name="Wang Z.-Y."/>
            <person name="Wassarman D.A."/>
            <person name="Weinstock G.M."/>
            <person name="Weissenbach J."/>
            <person name="Williams S.M."/>
            <person name="Woodage T."/>
            <person name="Worley K.C."/>
            <person name="Wu D."/>
            <person name="Yang S."/>
            <person name="Yao Q.A."/>
            <person name="Ye J."/>
            <person name="Yeh R.-F."/>
            <person name="Zaveri J.S."/>
            <person name="Zhan M."/>
            <person name="Zhang G."/>
            <person name="Zhao Q."/>
            <person name="Zheng L."/>
            <person name="Zheng X.H."/>
            <person name="Zhong F.N."/>
            <person name="Zhong W."/>
            <person name="Zhou X."/>
            <person name="Zhu S.C."/>
            <person name="Zhu X."/>
            <person name="Smith H.O."/>
            <person name="Gibbs R.A."/>
            <person name="Myers E.W."/>
            <person name="Rubin G.M."/>
            <person name="Venter J.C."/>
        </authorList>
    </citation>
    <scope>NUCLEOTIDE SEQUENCE [LARGE SCALE GENOMIC DNA]</scope>
    <source>
        <strain evidence="5">Berkeley</strain>
    </source>
</reference>
<reference evidence="9" key="2">
    <citation type="journal article" date="2002" name="Genome Biol.">
        <title>Annotation of the Drosophila melanogaster euchromatic genome: a systematic review.</title>
        <authorList>
            <person name="Misra S."/>
            <person name="Crosby M.A."/>
            <person name="Mungall C.J."/>
            <person name="Matthews B.B."/>
            <person name="Campbell K.S."/>
            <person name="Hradecky P."/>
            <person name="Huang Y."/>
            <person name="Kaminker J.S."/>
            <person name="Millburn G.H."/>
            <person name="Prochnik S.E."/>
            <person name="Smith C.D."/>
            <person name="Tupy J.L."/>
            <person name="Whitfield E.J."/>
            <person name="Bayraktaroglu L."/>
            <person name="Berman B.P."/>
            <person name="Bettencourt B.R."/>
            <person name="Celniker S.E."/>
            <person name="de Grey A.D.N.J."/>
            <person name="Drysdale R.A."/>
            <person name="Harris N.L."/>
            <person name="Richter J."/>
            <person name="Russo S."/>
            <person name="Schroeder A.J."/>
            <person name="Shu S.Q."/>
            <person name="Stapleton M."/>
            <person name="Yamada C."/>
            <person name="Ashburner M."/>
            <person name="Gelbart W.M."/>
            <person name="Rubin G.M."/>
            <person name="Lewis S.E."/>
        </authorList>
    </citation>
    <scope>GENOME REANNOTATION</scope>
    <source>
        <strain>Berkeley</strain>
    </source>
</reference>
<reference evidence="9" key="3">
    <citation type="journal article" date="2002" name="Genome Biol.">
        <title>A Drosophila full-length cDNA resource.</title>
        <authorList>
            <person name="Stapleton M."/>
            <person name="Carlson J.W."/>
            <person name="Brokstein P."/>
            <person name="Yu C."/>
            <person name="Champe M."/>
            <person name="George R.A."/>
            <person name="Guarin H."/>
            <person name="Kronmiller B."/>
            <person name="Pacleb J.M."/>
            <person name="Park S."/>
            <person name="Wan K.H."/>
            <person name="Rubin G.M."/>
            <person name="Celniker S.E."/>
        </authorList>
    </citation>
    <scope>NUCLEOTIDE SEQUENCE [LARGE SCALE MRNA]</scope>
    <source>
        <strain evidence="6">Berkeley</strain>
        <tissue evidence="6">Embryo</tissue>
    </source>
</reference>
<reference evidence="9" key="4">
    <citation type="journal article" date="1993" name="J. Cell Sci.">
        <title>Characterization of a putative Drosophila GTP-binding protein.</title>
        <authorList>
            <person name="Fredieu J.R."/>
            <person name="Mahowald A.P."/>
        </authorList>
    </citation>
    <scope>NUCLEOTIDE SEQUENCE OF 402-573</scope>
    <scope>FUNCTION</scope>
    <scope>TISSUE SPECIFICITY</scope>
    <scope>DEVELOPMENTAL STAGE</scope>
    <source>
        <tissue evidence="8">Head</tissue>
        <tissue evidence="8">Ventral nerve cord</tissue>
    </source>
</reference>
<reference key="5">
    <citation type="journal article" date="2008" name="J. Proteome Res.">
        <title>Phosphoproteome analysis of Drosophila melanogaster embryos.</title>
        <authorList>
            <person name="Zhai B."/>
            <person name="Villen J."/>
            <person name="Beausoleil S.A."/>
            <person name="Mintseris J."/>
            <person name="Gygi S.P."/>
        </authorList>
    </citation>
    <scope>PHOSPHORYLATION [LARGE SCALE ANALYSIS] AT SER-237; SER-240; TYR-246; SER-268; SER-278 AND SER-279</scope>
    <scope>IDENTIFICATION BY MASS SPECTROMETRY</scope>
    <source>
        <tissue>Embryo</tissue>
    </source>
</reference>
<keyword id="KW-0256">Endoplasmic reticulum</keyword>
<keyword id="KW-0342">GTP-binding</keyword>
<keyword id="KW-0472">Membrane</keyword>
<keyword id="KW-0547">Nucleotide-binding</keyword>
<keyword id="KW-0597">Phosphoprotein</keyword>
<keyword id="KW-0675">Receptor</keyword>
<keyword id="KW-1185">Reference proteome</keyword>
<name>SRPRA_DROME</name>